<sequence>FINTIRLLINKYREWKNKKDS</sequence>
<feature type="peptide" id="PRO_0000421226" description="Cupiennin-6c" evidence="1">
    <location>
        <begin position="1"/>
        <end position="21"/>
    </location>
</feature>
<feature type="modified residue" description="Serine amide" evidence="1">
    <location>
        <position position="21"/>
    </location>
</feature>
<proteinExistence type="evidence at protein level"/>
<name>TXC6C_CUPSA</name>
<reference key="1">
    <citation type="journal article" date="2012" name="FEBS J.">
        <title>Multicomponent venom of the spider Cupiennius salei: a bioanalytical investigation applying different strategies.</title>
        <authorList>
            <person name="Trachsel C."/>
            <person name="Siegemund D."/>
            <person name="Kampfer U."/>
            <person name="Kopp L.S."/>
            <person name="Buhr C."/>
            <person name="Grossmann J."/>
            <person name="Luthi C."/>
            <person name="Cunningham M."/>
            <person name="Nentwig W."/>
            <person name="Kuhn-Nentwig L."/>
            <person name="Schurch S."/>
            <person name="Schaller J."/>
        </authorList>
    </citation>
    <scope>PROTEIN SEQUENCE</scope>
    <scope>MASS SPECTROMETRY</scope>
    <scope>AMIDATION AT SER-21</scope>
    <source>
        <tissue>Venom</tissue>
    </source>
</reference>
<reference key="2">
    <citation type="unpublished observations" date="2015-06">
        <authorList>
            <person name="Kuhn-Nentwig L."/>
            <person name="Gohel T."/>
        </authorList>
    </citation>
    <scope>NOMENCLATURE</scope>
</reference>
<evidence type="ECO:0000269" key="1">
    <source>
    </source>
</evidence>
<evidence type="ECO:0000303" key="2">
    <source>
    </source>
</evidence>
<evidence type="ECO:0000303" key="3">
    <source ref="2"/>
</evidence>
<evidence type="ECO:0000305" key="4"/>
<evidence type="ECO:0000305" key="5">
    <source>
    </source>
</evidence>
<comment type="subcellular location">
    <subcellularLocation>
        <location evidence="1">Secreted</location>
    </subcellularLocation>
</comment>
<comment type="tissue specificity">
    <text evidence="5">Expressed by the venom gland.</text>
</comment>
<comment type="mass spectrometry"/>
<comment type="similarity">
    <text evidence="4">Belongs to the cationic peptide 04 (cupiennin) family. 09 subfamily.</text>
</comment>
<accession>B3EWW7</accession>
<dbReference type="GO" id="GO:0005576">
    <property type="term" value="C:extracellular region"/>
    <property type="evidence" value="ECO:0007669"/>
    <property type="project" value="UniProtKB-SubCell"/>
</dbReference>
<dbReference type="GO" id="GO:0090729">
    <property type="term" value="F:toxin activity"/>
    <property type="evidence" value="ECO:0007669"/>
    <property type="project" value="UniProtKB-KW"/>
</dbReference>
<protein>
    <recommendedName>
        <fullName evidence="3">Cupiennin-6c</fullName>
        <shortName evidence="3">Cu-6c</shortName>
    </recommendedName>
    <alternativeName>
        <fullName evidence="2">Short cationic peptide-6c</fullName>
        <shortName evidence="2">SCP-6c</shortName>
    </alternativeName>
</protein>
<organism>
    <name type="scientific">Cupiennius salei</name>
    <name type="common">American wandering spider</name>
    <dbReference type="NCBI Taxonomy" id="6928"/>
    <lineage>
        <taxon>Eukaryota</taxon>
        <taxon>Metazoa</taxon>
        <taxon>Ecdysozoa</taxon>
        <taxon>Arthropoda</taxon>
        <taxon>Chelicerata</taxon>
        <taxon>Arachnida</taxon>
        <taxon>Araneae</taxon>
        <taxon>Araneomorphae</taxon>
        <taxon>Entelegynae</taxon>
        <taxon>Lycosoidea</taxon>
        <taxon>Ctenidae</taxon>
        <taxon>Cupiennius</taxon>
    </lineage>
</organism>
<keyword id="KW-0027">Amidation</keyword>
<keyword id="KW-0903">Direct protein sequencing</keyword>
<keyword id="KW-0964">Secreted</keyword>
<keyword id="KW-0800">Toxin</keyword>